<sequence>MASLLWGGDAGAAESERLNGHFSNLIHPQNHLLGIKSATIPNIDGSVNRIEEDDEDDVVDLAANSLLNKLIRQSLVESSHRVEVLQKDPSSPLYSVKTFEELRLKEELLKGIYAMGFNRPSKIQEMALPMMLAHPPQNLIAQSQSGTGKTAAFVLAMLSRVNALKLFPQCLCLAPTYELALQTGRVVERMGKFCVDVQVMYAIRGNRIPRGTDVTKQIVIGTPGTVLDWCFKRKLIDLTKIRVFVLDEADVMIDTQGFEDQSIRIQRALPSECQMLLFSATFEDSVWQFAERIIPDPNVIKLRKEELTLNNIRQYYVLCGNRKDKYQALCNIYGGITIGQAIIFCQTRRNAKWLTVEMMQDGHQVSLLSGELTVDQRASIIQRFRDGKEKVLITTNVCARGIDVKQVTIVVNFDLPVNQAEEPDYETYLHRIGRTGRFGKKGLAFNMIEVDKLPLLMKIQDHFNSSIKQLDPEDMDEIEKIEY</sequence>
<protein>
    <recommendedName>
        <fullName>ATP-dependent RNA helicase DDX25</fullName>
        <ecNumber>3.6.4.13</ecNumber>
    </recommendedName>
    <alternativeName>
        <fullName>DEAD box protein 25</fullName>
    </alternativeName>
</protein>
<accession>Q2TBP1</accession>
<proteinExistence type="evidence at transcript level"/>
<name>DDX25_BOVIN</name>
<dbReference type="EC" id="3.6.4.13"/>
<dbReference type="EMBL" id="BC109867">
    <property type="protein sequence ID" value="AAI09868.1"/>
    <property type="molecule type" value="mRNA"/>
</dbReference>
<dbReference type="RefSeq" id="NP_001033606.1">
    <property type="nucleotide sequence ID" value="NM_001038517.1"/>
</dbReference>
<dbReference type="SMR" id="Q2TBP1"/>
<dbReference type="FunCoup" id="Q2TBP1">
    <property type="interactions" value="2313"/>
</dbReference>
<dbReference type="STRING" id="9913.ENSBTAP00000005587"/>
<dbReference type="PaxDb" id="9913-ENSBTAP00000005587"/>
<dbReference type="GeneID" id="508962"/>
<dbReference type="KEGG" id="bta:508962"/>
<dbReference type="CTD" id="29118"/>
<dbReference type="eggNOG" id="KOG0332">
    <property type="taxonomic scope" value="Eukaryota"/>
</dbReference>
<dbReference type="InParanoid" id="Q2TBP1"/>
<dbReference type="OrthoDB" id="10265785at2759"/>
<dbReference type="Proteomes" id="UP000009136">
    <property type="component" value="Unplaced"/>
</dbReference>
<dbReference type="GO" id="GO:0033391">
    <property type="term" value="C:chromatoid body"/>
    <property type="evidence" value="ECO:0000250"/>
    <property type="project" value="UniProtKB"/>
</dbReference>
<dbReference type="GO" id="GO:0005737">
    <property type="term" value="C:cytoplasm"/>
    <property type="evidence" value="ECO:0000250"/>
    <property type="project" value="UniProtKB"/>
</dbReference>
<dbReference type="GO" id="GO:0010494">
    <property type="term" value="C:cytoplasmic stress granule"/>
    <property type="evidence" value="ECO:0000318"/>
    <property type="project" value="GO_Central"/>
</dbReference>
<dbReference type="GO" id="GO:0005634">
    <property type="term" value="C:nucleus"/>
    <property type="evidence" value="ECO:0000250"/>
    <property type="project" value="UniProtKB"/>
</dbReference>
<dbReference type="GO" id="GO:0005524">
    <property type="term" value="F:ATP binding"/>
    <property type="evidence" value="ECO:0000250"/>
    <property type="project" value="UniProtKB"/>
</dbReference>
<dbReference type="GO" id="GO:0016887">
    <property type="term" value="F:ATP hydrolysis activity"/>
    <property type="evidence" value="ECO:0007669"/>
    <property type="project" value="RHEA"/>
</dbReference>
<dbReference type="GO" id="GO:0003729">
    <property type="term" value="F:mRNA binding"/>
    <property type="evidence" value="ECO:0000318"/>
    <property type="project" value="GO_Central"/>
</dbReference>
<dbReference type="GO" id="GO:0003724">
    <property type="term" value="F:RNA helicase activity"/>
    <property type="evidence" value="ECO:0000250"/>
    <property type="project" value="UniProtKB"/>
</dbReference>
<dbReference type="GO" id="GO:0006406">
    <property type="term" value="P:mRNA export from nucleus"/>
    <property type="evidence" value="ECO:0000250"/>
    <property type="project" value="UniProtKB"/>
</dbReference>
<dbReference type="GO" id="GO:0016973">
    <property type="term" value="P:poly(A)+ mRNA export from nucleus"/>
    <property type="evidence" value="ECO:0000318"/>
    <property type="project" value="GO_Central"/>
</dbReference>
<dbReference type="GO" id="GO:0006417">
    <property type="term" value="P:regulation of translation"/>
    <property type="evidence" value="ECO:0000250"/>
    <property type="project" value="UniProtKB"/>
</dbReference>
<dbReference type="GO" id="GO:0007286">
    <property type="term" value="P:spermatid development"/>
    <property type="evidence" value="ECO:0000250"/>
    <property type="project" value="UniProtKB"/>
</dbReference>
<dbReference type="CDD" id="cd18787">
    <property type="entry name" value="SF2_C_DEAD"/>
    <property type="match status" value="1"/>
</dbReference>
<dbReference type="FunFam" id="3.40.50.300:FF:000318">
    <property type="entry name" value="ATP-dependent RNA helicase DDX19B"/>
    <property type="match status" value="1"/>
</dbReference>
<dbReference type="FunFam" id="3.40.50.300:FF:000357">
    <property type="entry name" value="ATP-dependent RNA helicase DDX19B"/>
    <property type="match status" value="1"/>
</dbReference>
<dbReference type="Gene3D" id="6.10.250.2170">
    <property type="match status" value="1"/>
</dbReference>
<dbReference type="Gene3D" id="3.40.50.300">
    <property type="entry name" value="P-loop containing nucleotide triphosphate hydrolases"/>
    <property type="match status" value="2"/>
</dbReference>
<dbReference type="InterPro" id="IPR011545">
    <property type="entry name" value="DEAD/DEAH_box_helicase_dom"/>
</dbReference>
<dbReference type="InterPro" id="IPR014001">
    <property type="entry name" value="Helicase_ATP-bd"/>
</dbReference>
<dbReference type="InterPro" id="IPR001650">
    <property type="entry name" value="Helicase_C-like"/>
</dbReference>
<dbReference type="InterPro" id="IPR027417">
    <property type="entry name" value="P-loop_NTPase"/>
</dbReference>
<dbReference type="InterPro" id="IPR014014">
    <property type="entry name" value="RNA_helicase_DEAD_Q_motif"/>
</dbReference>
<dbReference type="PANTHER" id="PTHR47958">
    <property type="entry name" value="ATP-DEPENDENT RNA HELICASE DBP3"/>
    <property type="match status" value="1"/>
</dbReference>
<dbReference type="Pfam" id="PF00270">
    <property type="entry name" value="DEAD"/>
    <property type="match status" value="1"/>
</dbReference>
<dbReference type="Pfam" id="PF00271">
    <property type="entry name" value="Helicase_C"/>
    <property type="match status" value="1"/>
</dbReference>
<dbReference type="SMART" id="SM00487">
    <property type="entry name" value="DEXDc"/>
    <property type="match status" value="1"/>
</dbReference>
<dbReference type="SMART" id="SM00490">
    <property type="entry name" value="HELICc"/>
    <property type="match status" value="1"/>
</dbReference>
<dbReference type="SUPFAM" id="SSF52540">
    <property type="entry name" value="P-loop containing nucleoside triphosphate hydrolases"/>
    <property type="match status" value="1"/>
</dbReference>
<dbReference type="PROSITE" id="PS51192">
    <property type="entry name" value="HELICASE_ATP_BIND_1"/>
    <property type="match status" value="1"/>
</dbReference>
<dbReference type="PROSITE" id="PS51194">
    <property type="entry name" value="HELICASE_CTER"/>
    <property type="match status" value="1"/>
</dbReference>
<dbReference type="PROSITE" id="PS51195">
    <property type="entry name" value="Q_MOTIF"/>
    <property type="match status" value="1"/>
</dbReference>
<organism>
    <name type="scientific">Bos taurus</name>
    <name type="common">Bovine</name>
    <dbReference type="NCBI Taxonomy" id="9913"/>
    <lineage>
        <taxon>Eukaryota</taxon>
        <taxon>Metazoa</taxon>
        <taxon>Chordata</taxon>
        <taxon>Craniata</taxon>
        <taxon>Vertebrata</taxon>
        <taxon>Euteleostomi</taxon>
        <taxon>Mammalia</taxon>
        <taxon>Eutheria</taxon>
        <taxon>Laurasiatheria</taxon>
        <taxon>Artiodactyla</taxon>
        <taxon>Ruminantia</taxon>
        <taxon>Pecora</taxon>
        <taxon>Bovidae</taxon>
        <taxon>Bovinae</taxon>
        <taxon>Bos</taxon>
    </lineage>
</organism>
<evidence type="ECO:0000250" key="1"/>
<evidence type="ECO:0000250" key="2">
    <source>
        <dbReference type="UniProtKB" id="Q9QY15"/>
    </source>
</evidence>
<evidence type="ECO:0000255" key="3">
    <source>
        <dbReference type="PROSITE-ProRule" id="PRU00541"/>
    </source>
</evidence>
<evidence type="ECO:0000255" key="4">
    <source>
        <dbReference type="PROSITE-ProRule" id="PRU00542"/>
    </source>
</evidence>
<evidence type="ECO:0000305" key="5"/>
<gene>
    <name type="primary">DDX25</name>
</gene>
<reference key="1">
    <citation type="submission" date="2005-11" db="EMBL/GenBank/DDBJ databases">
        <authorList>
            <consortium name="NIH - Mammalian Gene Collection (MGC) project"/>
        </authorList>
    </citation>
    <scope>NUCLEOTIDE SEQUENCE [LARGE SCALE MRNA]</scope>
    <source>
        <strain>Crossbred X Angus</strain>
        <tissue>Liver</tissue>
    </source>
</reference>
<comment type="function">
    <text evidence="1">ATP-dependent RNA helicase. Required for mRNA export and translation regulation during spermatid development (By similarity).</text>
</comment>
<comment type="catalytic activity">
    <reaction>
        <text>ATP + H2O = ADP + phosphate + H(+)</text>
        <dbReference type="Rhea" id="RHEA:13065"/>
        <dbReference type="ChEBI" id="CHEBI:15377"/>
        <dbReference type="ChEBI" id="CHEBI:15378"/>
        <dbReference type="ChEBI" id="CHEBI:30616"/>
        <dbReference type="ChEBI" id="CHEBI:43474"/>
        <dbReference type="ChEBI" id="CHEBI:456216"/>
        <dbReference type="EC" id="3.6.4.13"/>
    </reaction>
</comment>
<comment type="subcellular location">
    <subcellularLocation>
        <location evidence="2">Cytoplasm</location>
    </subcellularLocation>
    <subcellularLocation>
        <location evidence="2">Nucleus</location>
    </subcellularLocation>
    <text evidence="2">Detected in both cytoplasm and nucleus of testicular cells. Also detected in chromatoid bodies of round spermatids.</text>
</comment>
<comment type="PTM">
    <text evidence="1">Phosphorylated on threonine residues. The phosphorylated form is found in the cytoplasm but not in the nucleus (By similarity).</text>
</comment>
<comment type="similarity">
    <text evidence="5">Belongs to the DEAD box helicase family.</text>
</comment>
<keyword id="KW-0067">ATP-binding</keyword>
<keyword id="KW-0963">Cytoplasm</keyword>
<keyword id="KW-0217">Developmental protein</keyword>
<keyword id="KW-0221">Differentiation</keyword>
<keyword id="KW-0347">Helicase</keyword>
<keyword id="KW-0378">Hydrolase</keyword>
<keyword id="KW-0509">mRNA transport</keyword>
<keyword id="KW-0547">Nucleotide-binding</keyword>
<keyword id="KW-0539">Nucleus</keyword>
<keyword id="KW-0597">Phosphoprotein</keyword>
<keyword id="KW-1185">Reference proteome</keyword>
<keyword id="KW-0694">RNA-binding</keyword>
<keyword id="KW-0744">Spermatogenesis</keyword>
<keyword id="KW-0810">Translation regulation</keyword>
<keyword id="KW-0813">Transport</keyword>
<feature type="chain" id="PRO_0000282328" description="ATP-dependent RNA helicase DDX25">
    <location>
        <begin position="1"/>
        <end position="483"/>
    </location>
</feature>
<feature type="domain" description="Helicase ATP-binding" evidence="3">
    <location>
        <begin position="130"/>
        <end position="300"/>
    </location>
</feature>
<feature type="domain" description="Helicase C-terminal" evidence="4">
    <location>
        <begin position="311"/>
        <end position="478"/>
    </location>
</feature>
<feature type="short sequence motif" description="Nuclear export signal" evidence="1">
    <location>
        <begin position="61"/>
        <end position="74"/>
    </location>
</feature>
<feature type="short sequence motif" description="Q motif">
    <location>
        <begin position="97"/>
        <end position="125"/>
    </location>
</feature>
<feature type="short sequence motif" description="Nuclear localization signal" evidence="1">
    <location>
        <begin position="100"/>
        <end position="114"/>
    </location>
</feature>
<feature type="short sequence motif" description="DEAD box">
    <location>
        <begin position="247"/>
        <end position="250"/>
    </location>
</feature>
<feature type="binding site" evidence="3">
    <location>
        <begin position="143"/>
        <end position="150"/>
    </location>
    <ligand>
        <name>ATP</name>
        <dbReference type="ChEBI" id="CHEBI:30616"/>
    </ligand>
</feature>